<evidence type="ECO:0000255" key="1">
    <source>
        <dbReference type="HAMAP-Rule" id="MF_01331"/>
    </source>
</evidence>
<evidence type="ECO:0000305" key="2"/>
<gene>
    <name evidence="1" type="primary">rplV</name>
    <name type="ordered locus">RBE_1057</name>
</gene>
<proteinExistence type="inferred from homology"/>
<protein>
    <recommendedName>
        <fullName evidence="1">Large ribosomal subunit protein uL22</fullName>
    </recommendedName>
    <alternativeName>
        <fullName evidence="2">50S ribosomal protein L22</fullName>
    </alternativeName>
</protein>
<organism>
    <name type="scientific">Rickettsia bellii (strain RML369-C)</name>
    <dbReference type="NCBI Taxonomy" id="336407"/>
    <lineage>
        <taxon>Bacteria</taxon>
        <taxon>Pseudomonadati</taxon>
        <taxon>Pseudomonadota</taxon>
        <taxon>Alphaproteobacteria</taxon>
        <taxon>Rickettsiales</taxon>
        <taxon>Rickettsiaceae</taxon>
        <taxon>Rickettsieae</taxon>
        <taxon>Rickettsia</taxon>
        <taxon>belli group</taxon>
    </lineage>
</organism>
<accession>Q1RHM6</accession>
<keyword id="KW-0687">Ribonucleoprotein</keyword>
<keyword id="KW-0689">Ribosomal protein</keyword>
<keyword id="KW-0694">RNA-binding</keyword>
<keyword id="KW-0699">rRNA-binding</keyword>
<sequence>MVQENKNFATAKAKSIRVSPRKLNLVAAFIRNMKVSEALVQLTFSPKRISKVVKACLQSAVANAENNLGLDIDRLVITNATVGKALVMKRVMPRAKGRATRINKFFSNLYITVTEKEDN</sequence>
<comment type="function">
    <text evidence="1">This protein binds specifically to 23S rRNA; its binding is stimulated by other ribosomal proteins, e.g. L4, L17, and L20. It is important during the early stages of 50S assembly. It makes multiple contacts with different domains of the 23S rRNA in the assembled 50S subunit and ribosome (By similarity).</text>
</comment>
<comment type="function">
    <text evidence="1">The globular domain of the protein is located near the polypeptide exit tunnel on the outside of the subunit, while an extended beta-hairpin is found that lines the wall of the exit tunnel in the center of the 70S ribosome.</text>
</comment>
<comment type="subunit">
    <text evidence="1">Part of the 50S ribosomal subunit.</text>
</comment>
<comment type="similarity">
    <text evidence="1">Belongs to the universal ribosomal protein uL22 family.</text>
</comment>
<dbReference type="EMBL" id="CP000087">
    <property type="protein sequence ID" value="ABE05138.1"/>
    <property type="molecule type" value="Genomic_DNA"/>
</dbReference>
<dbReference type="RefSeq" id="WP_011477716.1">
    <property type="nucleotide sequence ID" value="NC_007940.1"/>
</dbReference>
<dbReference type="SMR" id="Q1RHM6"/>
<dbReference type="KEGG" id="rbe:RBE_1057"/>
<dbReference type="eggNOG" id="COG0091">
    <property type="taxonomic scope" value="Bacteria"/>
</dbReference>
<dbReference type="HOGENOM" id="CLU_083987_3_0_5"/>
<dbReference type="OrthoDB" id="9805969at2"/>
<dbReference type="Proteomes" id="UP000001951">
    <property type="component" value="Chromosome"/>
</dbReference>
<dbReference type="GO" id="GO:0022625">
    <property type="term" value="C:cytosolic large ribosomal subunit"/>
    <property type="evidence" value="ECO:0007669"/>
    <property type="project" value="TreeGrafter"/>
</dbReference>
<dbReference type="GO" id="GO:0019843">
    <property type="term" value="F:rRNA binding"/>
    <property type="evidence" value="ECO:0007669"/>
    <property type="project" value="UniProtKB-UniRule"/>
</dbReference>
<dbReference type="GO" id="GO:0003735">
    <property type="term" value="F:structural constituent of ribosome"/>
    <property type="evidence" value="ECO:0007669"/>
    <property type="project" value="InterPro"/>
</dbReference>
<dbReference type="GO" id="GO:0006412">
    <property type="term" value="P:translation"/>
    <property type="evidence" value="ECO:0007669"/>
    <property type="project" value="UniProtKB-UniRule"/>
</dbReference>
<dbReference type="CDD" id="cd00336">
    <property type="entry name" value="Ribosomal_L22"/>
    <property type="match status" value="1"/>
</dbReference>
<dbReference type="Gene3D" id="3.90.470.10">
    <property type="entry name" value="Ribosomal protein L22/L17"/>
    <property type="match status" value="1"/>
</dbReference>
<dbReference type="HAMAP" id="MF_01331_B">
    <property type="entry name" value="Ribosomal_uL22_B"/>
    <property type="match status" value="1"/>
</dbReference>
<dbReference type="InterPro" id="IPR001063">
    <property type="entry name" value="Ribosomal_uL22"/>
</dbReference>
<dbReference type="InterPro" id="IPR005727">
    <property type="entry name" value="Ribosomal_uL22_bac/chlpt-type"/>
</dbReference>
<dbReference type="InterPro" id="IPR047867">
    <property type="entry name" value="Ribosomal_uL22_bac/org-type"/>
</dbReference>
<dbReference type="InterPro" id="IPR018260">
    <property type="entry name" value="Ribosomal_uL22_CS"/>
</dbReference>
<dbReference type="InterPro" id="IPR036394">
    <property type="entry name" value="Ribosomal_uL22_sf"/>
</dbReference>
<dbReference type="NCBIfam" id="TIGR01044">
    <property type="entry name" value="rplV_bact"/>
    <property type="match status" value="1"/>
</dbReference>
<dbReference type="PANTHER" id="PTHR13501">
    <property type="entry name" value="CHLOROPLAST 50S RIBOSOMAL PROTEIN L22-RELATED"/>
    <property type="match status" value="1"/>
</dbReference>
<dbReference type="PANTHER" id="PTHR13501:SF8">
    <property type="entry name" value="LARGE RIBOSOMAL SUBUNIT PROTEIN UL22M"/>
    <property type="match status" value="1"/>
</dbReference>
<dbReference type="Pfam" id="PF00237">
    <property type="entry name" value="Ribosomal_L22"/>
    <property type="match status" value="1"/>
</dbReference>
<dbReference type="SUPFAM" id="SSF54843">
    <property type="entry name" value="Ribosomal protein L22"/>
    <property type="match status" value="1"/>
</dbReference>
<dbReference type="PROSITE" id="PS00464">
    <property type="entry name" value="RIBOSOMAL_L22"/>
    <property type="match status" value="1"/>
</dbReference>
<name>RL22_RICBR</name>
<reference key="1">
    <citation type="journal article" date="2006" name="PLoS Genet.">
        <title>Genome sequence of Rickettsia bellii illuminates the role of amoebae in gene exchanges between intracellular pathogens.</title>
        <authorList>
            <person name="Ogata H."/>
            <person name="La Scola B."/>
            <person name="Audic S."/>
            <person name="Renesto P."/>
            <person name="Blanc G."/>
            <person name="Robert C."/>
            <person name="Fournier P.-E."/>
            <person name="Claverie J.-M."/>
            <person name="Raoult D."/>
        </authorList>
    </citation>
    <scope>NUCLEOTIDE SEQUENCE [LARGE SCALE GENOMIC DNA]</scope>
    <source>
        <strain>RML369-C</strain>
    </source>
</reference>
<feature type="chain" id="PRO_0000243198" description="Large ribosomal subunit protein uL22">
    <location>
        <begin position="1"/>
        <end position="119"/>
    </location>
</feature>